<reference key="1">
    <citation type="journal article" date="2005" name="Nucleic Acids Res.">
        <title>Genome dynamics and diversity of Shigella species, the etiologic agents of bacillary dysentery.</title>
        <authorList>
            <person name="Yang F."/>
            <person name="Yang J."/>
            <person name="Zhang X."/>
            <person name="Chen L."/>
            <person name="Jiang Y."/>
            <person name="Yan Y."/>
            <person name="Tang X."/>
            <person name="Wang J."/>
            <person name="Xiong Z."/>
            <person name="Dong J."/>
            <person name="Xue Y."/>
            <person name="Zhu Y."/>
            <person name="Xu X."/>
            <person name="Sun L."/>
            <person name="Chen S."/>
            <person name="Nie H."/>
            <person name="Peng J."/>
            <person name="Xu J."/>
            <person name="Wang Y."/>
            <person name="Yuan Z."/>
            <person name="Wen Y."/>
            <person name="Yao Z."/>
            <person name="Shen Y."/>
            <person name="Qiang B."/>
            <person name="Hou Y."/>
            <person name="Yu J."/>
            <person name="Jin Q."/>
        </authorList>
    </citation>
    <scope>NUCLEOTIDE SEQUENCE [LARGE SCALE GENOMIC DNA]</scope>
    <source>
        <strain>Sb227</strain>
    </source>
</reference>
<accession>Q31U82</accession>
<proteinExistence type="inferred from homology"/>
<comment type="function">
    <text evidence="1">Uptake of L-rhamnose across the cytoplasmic membrane with the concomitant transport of protons into the cell (symport system).</text>
</comment>
<comment type="catalytic activity">
    <reaction evidence="1">
        <text>L-rhamnopyranose(in) + H(+)(in) = L-rhamnopyranose(out) + H(+)(out)</text>
        <dbReference type="Rhea" id="RHEA:29947"/>
        <dbReference type="ChEBI" id="CHEBI:15378"/>
        <dbReference type="ChEBI" id="CHEBI:62346"/>
    </reaction>
    <physiologicalReaction direction="right-to-left" evidence="1">
        <dbReference type="Rhea" id="RHEA:29949"/>
    </physiologicalReaction>
</comment>
<comment type="subcellular location">
    <subcellularLocation>
        <location evidence="1">Cell inner membrane</location>
        <topology evidence="1">Multi-pass membrane protein</topology>
    </subcellularLocation>
</comment>
<comment type="similarity">
    <text evidence="1">Belongs to the L-rhamnose transporter (TC 2.A.7.6) family.</text>
</comment>
<feature type="chain" id="PRO_0000292766" description="L-rhamnose-proton symporter">
    <location>
        <begin position="1"/>
        <end position="344"/>
    </location>
</feature>
<feature type="transmembrane region" description="Helical" evidence="1">
    <location>
        <begin position="4"/>
        <end position="24"/>
    </location>
</feature>
<feature type="transmembrane region" description="Helical" evidence="1">
    <location>
        <begin position="38"/>
        <end position="58"/>
    </location>
</feature>
<feature type="transmembrane region" description="Helical" evidence="1">
    <location>
        <begin position="68"/>
        <end position="88"/>
    </location>
</feature>
<feature type="transmembrane region" description="Helical" evidence="1">
    <location>
        <begin position="101"/>
        <end position="121"/>
    </location>
</feature>
<feature type="transmembrane region" description="Helical" evidence="1">
    <location>
        <begin position="137"/>
        <end position="157"/>
    </location>
</feature>
<feature type="transmembrane region" description="Helical" evidence="1">
    <location>
        <begin position="175"/>
        <end position="195"/>
    </location>
</feature>
<feature type="transmembrane region" description="Helical" evidence="1">
    <location>
        <begin position="214"/>
        <end position="234"/>
    </location>
</feature>
<feature type="transmembrane region" description="Helical" evidence="1">
    <location>
        <begin position="259"/>
        <end position="279"/>
    </location>
</feature>
<feature type="transmembrane region" description="Helical" evidence="1">
    <location>
        <begin position="290"/>
        <end position="310"/>
    </location>
</feature>
<feature type="transmembrane region" description="Helical" evidence="1">
    <location>
        <begin position="323"/>
        <end position="343"/>
    </location>
</feature>
<protein>
    <recommendedName>
        <fullName evidence="1">L-rhamnose-proton symporter</fullName>
    </recommendedName>
    <alternativeName>
        <fullName evidence="1">L-rhamnose-H(+) transport protein</fullName>
    </alternativeName>
</protein>
<organism>
    <name type="scientific">Shigella boydii serotype 4 (strain Sb227)</name>
    <dbReference type="NCBI Taxonomy" id="300268"/>
    <lineage>
        <taxon>Bacteria</taxon>
        <taxon>Pseudomonadati</taxon>
        <taxon>Pseudomonadota</taxon>
        <taxon>Gammaproteobacteria</taxon>
        <taxon>Enterobacterales</taxon>
        <taxon>Enterobacteriaceae</taxon>
        <taxon>Shigella</taxon>
    </lineage>
</organism>
<name>RHAT_SHIBS</name>
<dbReference type="EMBL" id="CP000036">
    <property type="protein sequence ID" value="ABB68376.1"/>
    <property type="molecule type" value="Genomic_DNA"/>
</dbReference>
<dbReference type="RefSeq" id="WP_000063524.1">
    <property type="nucleotide sequence ID" value="NC_007613.1"/>
</dbReference>
<dbReference type="KEGG" id="sbo:SBO_3925"/>
<dbReference type="HOGENOM" id="CLU_066437_0_0_6"/>
<dbReference type="Proteomes" id="UP000007067">
    <property type="component" value="Chromosome"/>
</dbReference>
<dbReference type="GO" id="GO:0005886">
    <property type="term" value="C:plasma membrane"/>
    <property type="evidence" value="ECO:0007669"/>
    <property type="project" value="UniProtKB-SubCell"/>
</dbReference>
<dbReference type="GO" id="GO:0015153">
    <property type="term" value="F:rhamnose transmembrane transporter activity"/>
    <property type="evidence" value="ECO:0007669"/>
    <property type="project" value="UniProtKB-UniRule"/>
</dbReference>
<dbReference type="GO" id="GO:0015293">
    <property type="term" value="F:symporter activity"/>
    <property type="evidence" value="ECO:0007669"/>
    <property type="project" value="UniProtKB-KW"/>
</dbReference>
<dbReference type="HAMAP" id="MF_01532">
    <property type="entry name" value="RhaT"/>
    <property type="match status" value="1"/>
</dbReference>
<dbReference type="InterPro" id="IPR004673">
    <property type="entry name" value="L-rhamnose-proton_sym_RhaT"/>
</dbReference>
<dbReference type="NCBIfam" id="NF010021">
    <property type="entry name" value="PRK13499.1-1"/>
    <property type="match status" value="1"/>
</dbReference>
<dbReference type="NCBIfam" id="NF010023">
    <property type="entry name" value="PRK13499.1-3"/>
    <property type="match status" value="1"/>
</dbReference>
<dbReference type="NCBIfam" id="TIGR00776">
    <property type="entry name" value="RhaT"/>
    <property type="match status" value="1"/>
</dbReference>
<dbReference type="Pfam" id="PF06379">
    <property type="entry name" value="RhaT"/>
    <property type="match status" value="1"/>
</dbReference>
<gene>
    <name evidence="1" type="primary">rhaT</name>
    <name type="ordered locus">SBO_3925</name>
</gene>
<keyword id="KW-0997">Cell inner membrane</keyword>
<keyword id="KW-1003">Cell membrane</keyword>
<keyword id="KW-0472">Membrane</keyword>
<keyword id="KW-0762">Sugar transport</keyword>
<keyword id="KW-0769">Symport</keyword>
<keyword id="KW-0812">Transmembrane</keyword>
<keyword id="KW-1133">Transmembrane helix</keyword>
<keyword id="KW-0813">Transport</keyword>
<sequence>MSNAITMGIFWHLIGAASAACFYAPFKKVKKWSWETMWSVGGIVSWIILPWAISALLLPNFWAYYSSFSLSTLLPVFLFGAMWGIGNINYGLTMRYLGMSMGIGIAIGITLIVGTLMTPIINGNFDVLLNTEGGRMTLLGVLVALIGVGIVTRAGQLKERKMGIKAEEFNLKKGLVLAVMCGIFSAGMSFAMNAAKPMHEAAAALGVDPLYVALPSYVIIMGGGAIINLGFCFIRLAKVKDLSLKADFSLAKPLIIHNVLLSALGGLMWYLQFFFYAWGHARIPAQYDYISWMLHMSFYVLCGGIVGLVLKEWNNAGRRPVTVLSLGCVVIIVAANIVGIGMAN</sequence>
<evidence type="ECO:0000255" key="1">
    <source>
        <dbReference type="HAMAP-Rule" id="MF_01532"/>
    </source>
</evidence>